<keyword id="KW-1003">Cell membrane</keyword>
<keyword id="KW-0328">Glycosyltransferase</keyword>
<keyword id="KW-0472">Membrane</keyword>
<keyword id="KW-0536">Nodulation</keyword>
<keyword id="KW-0614">Plasmid</keyword>
<keyword id="KW-0808">Transferase</keyword>
<proteinExistence type="inferred from homology"/>
<protein>
    <recommendedName>
        <fullName>N-acetylglucosaminyltransferase</fullName>
        <ecNumber>2.4.1.-</ecNumber>
    </recommendedName>
    <alternativeName>
        <fullName>Nodulation protein C</fullName>
    </alternativeName>
</protein>
<comment type="function">
    <text>Involved in the synthesis of Nod factor, a sulfated N-acyl-beta-1,4-tetrasaccharide of N-acetylglucosamine which initiates a series of events in the host plant species leading eventually to nodulation.</text>
</comment>
<comment type="subcellular location">
    <subcellularLocation>
        <location evidence="1">Cell membrane</location>
        <topology evidence="1">Peripheral membrane protein</topology>
    </subcellularLocation>
</comment>
<comment type="similarity">
    <text evidence="1">Belongs to the NodC/HAS family.</text>
</comment>
<geneLocation type="plasmid">
    <name>sym pRL1JI</name>
</geneLocation>
<gene>
    <name type="primary">nodC</name>
</gene>
<reference key="1">
    <citation type="journal article" date="1984" name="Nucleic Acids Res.">
        <title>DNA sequence of the Rhizobium leguminosarum nodulation genes nodAB and C required for root hair curling.</title>
        <authorList>
            <person name="Rossen L."/>
            <person name="Johnston A.W.B."/>
            <person name="Downie J.A."/>
        </authorList>
    </citation>
    <scope>NUCLEOTIDE SEQUENCE [GENOMIC DNA]</scope>
    <source>
        <strain>248</strain>
    </source>
</reference>
<reference key="2">
    <citation type="journal article" date="1995" name="J. Bacteriol.">
        <title>Phylogeny of Sym plasmids of rhizobia by PCR-based sequencing of a nodC segment.</title>
        <authorList>
            <person name="Ueda T."/>
            <person name="Suga Y."/>
            <person name="Yahiro N."/>
            <person name="Matsuguchi T."/>
        </authorList>
    </citation>
    <scope>NUCLEOTIDE SEQUENCE [GENOMIC DNA] OF 91-180</scope>
    <source>
        <strain>USDA 2478</strain>
    </source>
</reference>
<accession>P04340</accession>
<organism>
    <name type="scientific">Rhizobium leguminosarum bv. viciae</name>
    <dbReference type="NCBI Taxonomy" id="387"/>
    <lineage>
        <taxon>Bacteria</taxon>
        <taxon>Pseudomonadati</taxon>
        <taxon>Pseudomonadota</taxon>
        <taxon>Alphaproteobacteria</taxon>
        <taxon>Hyphomicrobiales</taxon>
        <taxon>Rhizobiaceae</taxon>
        <taxon>Rhizobium/Agrobacterium group</taxon>
        <taxon>Rhizobium</taxon>
    </lineage>
</organism>
<dbReference type="EC" id="2.4.1.-"/>
<dbReference type="EMBL" id="Y00548">
    <property type="protein sequence ID" value="CAA68619.1"/>
    <property type="molecule type" value="Genomic_DNA"/>
</dbReference>
<dbReference type="EMBL" id="X01650">
    <property type="protein sequence ID" value="CAA25814.1"/>
    <property type="molecule type" value="Genomic_DNA"/>
</dbReference>
<dbReference type="EMBL" id="D28960">
    <property type="protein sequence ID" value="BAA06086.1"/>
    <property type="molecule type" value="Genomic_DNA"/>
</dbReference>
<dbReference type="PIR" id="A03486">
    <property type="entry name" value="ZZZRCL"/>
</dbReference>
<dbReference type="SMR" id="P04340"/>
<dbReference type="CAZy" id="GT2">
    <property type="family name" value="Glycosyltransferase Family 2"/>
</dbReference>
<dbReference type="GO" id="GO:0005886">
    <property type="term" value="C:plasma membrane"/>
    <property type="evidence" value="ECO:0007669"/>
    <property type="project" value="UniProtKB-SubCell"/>
</dbReference>
<dbReference type="GO" id="GO:0050501">
    <property type="term" value="F:hyaluronan synthase activity"/>
    <property type="evidence" value="ECO:0007669"/>
    <property type="project" value="TreeGrafter"/>
</dbReference>
<dbReference type="GO" id="GO:0085029">
    <property type="term" value="P:extracellular matrix assembly"/>
    <property type="evidence" value="ECO:0007669"/>
    <property type="project" value="TreeGrafter"/>
</dbReference>
<dbReference type="GO" id="GO:0030213">
    <property type="term" value="P:hyaluronan biosynthetic process"/>
    <property type="evidence" value="ECO:0007669"/>
    <property type="project" value="TreeGrafter"/>
</dbReference>
<dbReference type="CDD" id="cd06423">
    <property type="entry name" value="CESA_like"/>
    <property type="match status" value="1"/>
</dbReference>
<dbReference type="Gene3D" id="3.90.550.10">
    <property type="entry name" value="Spore Coat Polysaccharide Biosynthesis Protein SpsA, Chain A"/>
    <property type="match status" value="1"/>
</dbReference>
<dbReference type="InterPro" id="IPR026463">
    <property type="entry name" value="Chitooligosach_Synthase_NodC"/>
</dbReference>
<dbReference type="InterPro" id="IPR001173">
    <property type="entry name" value="Glyco_trans_2-like"/>
</dbReference>
<dbReference type="InterPro" id="IPR029044">
    <property type="entry name" value="Nucleotide-diphossugar_trans"/>
</dbReference>
<dbReference type="NCBIfam" id="TIGR04242">
    <property type="entry name" value="nodulat_NodC"/>
    <property type="match status" value="1"/>
</dbReference>
<dbReference type="PANTHER" id="PTHR22913">
    <property type="entry name" value="HYALURONAN SYNTHASE"/>
    <property type="match status" value="1"/>
</dbReference>
<dbReference type="PANTHER" id="PTHR22913:SF12">
    <property type="entry name" value="MANNURONAN SYNTHASE"/>
    <property type="match status" value="1"/>
</dbReference>
<dbReference type="Pfam" id="PF00535">
    <property type="entry name" value="Glycos_transf_2"/>
    <property type="match status" value="1"/>
</dbReference>
<dbReference type="SUPFAM" id="SSF53448">
    <property type="entry name" value="Nucleotide-diphospho-sugar transferases"/>
    <property type="match status" value="1"/>
</dbReference>
<evidence type="ECO:0000305" key="1"/>
<feature type="chain" id="PRO_0000197191" description="N-acetylglucosaminyltransferase">
    <location>
        <begin position="1"/>
        <end position="424"/>
    </location>
</feature>
<feature type="sequence variant" description="In strain: USDA 2478.">
    <original>V</original>
    <variation>E</variation>
    <location>
        <position position="97"/>
    </location>
</feature>
<feature type="sequence variant" description="In strain: USDA 2478.">
    <original>N</original>
    <variation>K</variation>
    <location>
        <position position="110"/>
    </location>
</feature>
<feature type="sequence variant" description="In strain: USDA 2478.">
    <original>A</original>
    <variation>AQ</variation>
    <location>
        <position position="123"/>
    </location>
</feature>
<sequence length="424" mass="46256">MTLLATTSIAAISLYAMLSTVYKSAQVFHARRTTISTTPAKDIETNPVPSVDVIVPCFNEDPIVLSECLASLAEQDYAGKLRIYVVDDGSKNRDAVVAQRAAYADDERFNFTILPKNVGKRKAIAAITQSSGDLILNVDSDTTIAPDVVSKLAHKMRDPAVGAAMGQMKASNQADTWLTRLIDMEYWLACNEERAAQARFGAVMCCCGPCAMYRRSAMLSLLDQYETQLYRGKPSDFGEDRHLTILMLSAGFRTEYVPSAIAATVVPDTMGVYLRQQLRWARSTFRDTLLALPVLPGLDRYLTLDAIGQNVGLLLLALSVLTGIGQFALTATLPWWTILVIGSMTLVRCSVAAYRARELRFLGFALHTLVNIFLLIPLKAYALCTLSNSDWLSRGSVAIAPTVGQQGATKMPGRATSEIAYSGE</sequence>
<name>NODC_RHILV</name>